<gene>
    <name type="ORF">PF11_0213</name>
    <name type="ORF">PF3D7_1120600</name>
</gene>
<name>YK213_PLAF7</name>
<protein>
    <recommendedName>
        <fullName>Uncharacterized protein PF3D7_1120600</fullName>
    </recommendedName>
</protein>
<proteinExistence type="evidence at protein level"/>
<comment type="subcellular location">
    <subcellularLocation>
        <location evidence="1">Membrane</location>
        <topology evidence="4">Single-pass membrane protein</topology>
    </subcellularLocation>
</comment>
<comment type="developmental stage">
    <text evidence="3">Expressed during the asexual cell-cycle on the cell surface of the host erythrocytes.</text>
</comment>
<comment type="biotechnology">
    <text evidence="3">Possible candidate for an effective malaria vaccine as determined by epitope response in sera.</text>
</comment>
<evidence type="ECO:0000255" key="1"/>
<evidence type="ECO:0000256" key="2">
    <source>
        <dbReference type="SAM" id="MobiDB-lite"/>
    </source>
</evidence>
<evidence type="ECO:0000269" key="3">
    <source>
    </source>
</evidence>
<evidence type="ECO:0000305" key="4"/>
<accession>Q8IIG1</accession>
<accession>A0A144A2K5</accession>
<reference key="1">
    <citation type="journal article" date="2002" name="Nature">
        <title>Genome sequence of the human malaria parasite Plasmodium falciparum.</title>
        <authorList>
            <person name="Gardner M.J."/>
            <person name="Hall N."/>
            <person name="Fung E."/>
            <person name="White O."/>
            <person name="Berriman M."/>
            <person name="Hyman R.W."/>
            <person name="Carlton J.M."/>
            <person name="Pain A."/>
            <person name="Nelson K.E."/>
            <person name="Bowman S."/>
            <person name="Paulsen I.T."/>
            <person name="James K.D."/>
            <person name="Eisen J.A."/>
            <person name="Rutherford K.M."/>
            <person name="Salzberg S.L."/>
            <person name="Craig A."/>
            <person name="Kyes S."/>
            <person name="Chan M.-S."/>
            <person name="Nene V."/>
            <person name="Shallom S.J."/>
            <person name="Suh B."/>
            <person name="Peterson J."/>
            <person name="Angiuoli S."/>
            <person name="Pertea M."/>
            <person name="Allen J."/>
            <person name="Selengut J."/>
            <person name="Haft D."/>
            <person name="Mather M.W."/>
            <person name="Vaidya A.B."/>
            <person name="Martin D.M.A."/>
            <person name="Fairlamb A.H."/>
            <person name="Fraunholz M.J."/>
            <person name="Roos D.S."/>
            <person name="Ralph S.A."/>
            <person name="McFadden G.I."/>
            <person name="Cummings L.M."/>
            <person name="Subramanian G.M."/>
            <person name="Mungall C."/>
            <person name="Venter J.C."/>
            <person name="Carucci D.J."/>
            <person name="Hoffman S.L."/>
            <person name="Newbold C."/>
            <person name="Davis R.W."/>
            <person name="Fraser C.M."/>
            <person name="Barrell B.G."/>
        </authorList>
    </citation>
    <scope>NUCLEOTIDE SEQUENCE [LARGE SCALE GENOMIC DNA]</scope>
    <source>
        <strain>3D7</strain>
    </source>
</reference>
<reference evidence="4" key="2">
    <citation type="journal article" date="2007" name="PLoS ONE">
        <title>Rapid identification of malaria vaccine candidates based on alpha-helical coiled coil protein motif.</title>
        <authorList>
            <person name="Villard V."/>
            <person name="Agak G.W."/>
            <person name="Frank G."/>
            <person name="Jafarshad A."/>
            <person name="Servis C."/>
            <person name="Nebie I."/>
            <person name="Sirima S.B."/>
            <person name="Felger I."/>
            <person name="Arevalo-Herrera M."/>
            <person name="Herrera S."/>
            <person name="Heitz F."/>
            <person name="Baecker V."/>
            <person name="Druilhe P."/>
            <person name="Kajava A.V."/>
            <person name="Corradin G."/>
        </authorList>
    </citation>
    <scope>SYNTHESIS OF 125-149</scope>
    <scope>DEVELOPMENTAL STAGE</scope>
    <scope>POSSIBLE CANDIDATE MALARIA EPITOPE</scope>
</reference>
<keyword id="KW-0175">Coiled coil</keyword>
<keyword id="KW-0472">Membrane</keyword>
<keyword id="KW-0477">Merozoite</keyword>
<keyword id="KW-1185">Reference proteome</keyword>
<keyword id="KW-0812">Transmembrane</keyword>
<keyword id="KW-1133">Transmembrane helix</keyword>
<organism>
    <name type="scientific">Plasmodium falciparum (isolate 3D7)</name>
    <dbReference type="NCBI Taxonomy" id="36329"/>
    <lineage>
        <taxon>Eukaryota</taxon>
        <taxon>Sar</taxon>
        <taxon>Alveolata</taxon>
        <taxon>Apicomplexa</taxon>
        <taxon>Aconoidasida</taxon>
        <taxon>Haemosporida</taxon>
        <taxon>Plasmodiidae</taxon>
        <taxon>Plasmodium</taxon>
        <taxon>Plasmodium (Laverania)</taxon>
    </lineage>
</organism>
<feature type="chain" id="PRO_0000356833" description="Uncharacterized protein PF3D7_1120600">
    <location>
        <begin position="1"/>
        <end position="2545"/>
    </location>
</feature>
<feature type="transmembrane region" description="Helical" evidence="1">
    <location>
        <begin position="17"/>
        <end position="37"/>
    </location>
</feature>
<feature type="region of interest" description="Disordered" evidence="2">
    <location>
        <begin position="348"/>
        <end position="462"/>
    </location>
</feature>
<feature type="region of interest" description="Disordered" evidence="2">
    <location>
        <begin position="587"/>
        <end position="616"/>
    </location>
</feature>
<feature type="region of interest" description="Disordered" evidence="2">
    <location>
        <begin position="1214"/>
        <end position="1238"/>
    </location>
</feature>
<feature type="coiled-coil region" evidence="1">
    <location>
        <begin position="131"/>
        <end position="161"/>
    </location>
</feature>
<feature type="coiled-coil region" evidence="1">
    <location>
        <begin position="2303"/>
        <end position="2337"/>
    </location>
</feature>
<feature type="compositionally biased region" description="Basic and acidic residues" evidence="2">
    <location>
        <begin position="354"/>
        <end position="371"/>
    </location>
</feature>
<feature type="compositionally biased region" description="Basic and acidic residues" evidence="2">
    <location>
        <begin position="380"/>
        <end position="391"/>
    </location>
</feature>
<feature type="compositionally biased region" description="Basic and acidic residues" evidence="2">
    <location>
        <begin position="401"/>
        <end position="413"/>
    </location>
</feature>
<feature type="compositionally biased region" description="Low complexity" evidence="2">
    <location>
        <begin position="414"/>
        <end position="435"/>
    </location>
</feature>
<feature type="compositionally biased region" description="Basic and acidic residues" evidence="2">
    <location>
        <begin position="437"/>
        <end position="454"/>
    </location>
</feature>
<feature type="compositionally biased region" description="Basic and acidic residues" evidence="2">
    <location>
        <begin position="590"/>
        <end position="599"/>
    </location>
</feature>
<feature type="compositionally biased region" description="Polar residues" evidence="2">
    <location>
        <begin position="600"/>
        <end position="613"/>
    </location>
</feature>
<feature type="compositionally biased region" description="Basic and acidic residues" evidence="2">
    <location>
        <begin position="1219"/>
        <end position="1238"/>
    </location>
</feature>
<dbReference type="EMBL" id="LN999945">
    <property type="protein sequence ID" value="CZT98868.1"/>
    <property type="molecule type" value="Genomic_DNA"/>
</dbReference>
<dbReference type="RefSeq" id="XP_001347884.2">
    <property type="nucleotide sequence ID" value="XM_001347848.2"/>
</dbReference>
<dbReference type="SMR" id="Q8IIG1"/>
<dbReference type="FunCoup" id="Q8IIG1">
    <property type="interactions" value="42"/>
</dbReference>
<dbReference type="STRING" id="36329.Q8IIG1"/>
<dbReference type="PaxDb" id="5833-PF11_0213"/>
<dbReference type="EnsemblProtists" id="CZT98868">
    <property type="protein sequence ID" value="CZT98868"/>
    <property type="gene ID" value="PF3D7_1120600"/>
</dbReference>
<dbReference type="GeneID" id="810760"/>
<dbReference type="KEGG" id="pfa:PF3D7_1120600"/>
<dbReference type="VEuPathDB" id="PlasmoDB:PF3D7_1120600"/>
<dbReference type="HOGENOM" id="CLU_228218_0_0_1"/>
<dbReference type="InParanoid" id="Q8IIG1"/>
<dbReference type="OMA" id="VDINNCI"/>
<dbReference type="OrthoDB" id="2285710at2759"/>
<dbReference type="Proteomes" id="UP000001450">
    <property type="component" value="Chromosome 11"/>
</dbReference>
<dbReference type="GO" id="GO:0016020">
    <property type="term" value="C:membrane"/>
    <property type="evidence" value="ECO:0007669"/>
    <property type="project" value="UniProtKB-SubCell"/>
</dbReference>
<dbReference type="GO" id="GO:0044389">
    <property type="term" value="F:ubiquitin-like protein ligase binding"/>
    <property type="evidence" value="ECO:0000318"/>
    <property type="project" value="GO_Central"/>
</dbReference>
<dbReference type="Gene3D" id="1.10.10.10">
    <property type="entry name" value="Winged helix-like DNA-binding domain superfamily/Winged helix DNA-binding domain"/>
    <property type="match status" value="1"/>
</dbReference>
<dbReference type="InterPro" id="IPR019153">
    <property type="entry name" value="DDRGK_dom-contain"/>
</dbReference>
<dbReference type="InterPro" id="IPR050899">
    <property type="entry name" value="DDRGK_domain-containing"/>
</dbReference>
<dbReference type="InterPro" id="IPR036388">
    <property type="entry name" value="WH-like_DNA-bd_sf"/>
</dbReference>
<dbReference type="InterPro" id="IPR036390">
    <property type="entry name" value="WH_DNA-bd_sf"/>
</dbReference>
<dbReference type="PANTHER" id="PTHR48176">
    <property type="entry name" value="DDRGK DOMAIN-CONTAINING PROTEIN 1"/>
    <property type="match status" value="1"/>
</dbReference>
<dbReference type="PANTHER" id="PTHR48176:SF1">
    <property type="entry name" value="DDRGK DOMAIN-CONTAINING PROTEIN 1"/>
    <property type="match status" value="1"/>
</dbReference>
<dbReference type="SMART" id="SM01128">
    <property type="entry name" value="DDRGK"/>
    <property type="match status" value="1"/>
</dbReference>
<dbReference type="SUPFAM" id="SSF46785">
    <property type="entry name" value="Winged helix' DNA-binding domain"/>
    <property type="match status" value="1"/>
</dbReference>
<sequence>MNKFFQILEYFKIELSINFSITFIFINILLVFFSTFLYRNIKKVNDPDSYKTSYERKEKDSTFDEEENFDILNIFSNDPKSVENIYELENDIYNKSEESSICSNHNKNLDEKTYKINKKKVTIYLKLNEGLENIKQELHIIDRELKNILQKEENLQLINEEENIIIEKTKSDKYDEKENKSNDNILSKKHDDENINKSDIRNTLDSELKKKYELCKENNQLLENHHNNDNNQEDNNICEIEKQDYNNYNSDNKNHNDIFNYNYEDISLEKDKNIHHTKEITKNDTLCNTLDSIKNNRPTEEKTKNFNYNETNIYEENKKLKDSIVNSKNGENFLLKNNEQNINNNIINVNQKQSSDHKKESFKIDTKKNDQIEQNYQNGKNEKNEENEKNGMNEQNGKNEQNGKNEQNGKNEQNEQNDQIEQNYQNDPNDQNDQNDQNEKNDQNEKNDQNKKNEQNIGPKKTNEISYDSININISNNQNPKLSNVFVEDIKRILPISNNNLENSITTIKNIDDPSNSTKQELQNSDYENMHANKKIENGKESFICDITSNTNITRNSMDIPNIMDRKKSEYDKEVDNVSIKKKSYINHNMQRENTREDPSNNMDYTNKSTSDSNDIENENKMERCTNILGLDKRETVIKINDINKDNKHTNGIKCEDKRKSTSIHMEDINNSTNYLNNKEYNSKGENNNNILGDDKRESTFKIYDIQKSEYNSNDLQYDNKRERTSINLDNGNKNNVDINNYINVDDTKERISINLDNVNKNNVDINNYINDDNTKERTSINLDNGNKNNVDINNYINDDNTKERTSINLDNGNKNNVDINNYINDDNTKERTSINLDNGNKNNVDINNYINVDNTKERTSINLDNGNKKNVDINNYINDDNTKERTSINLDNGNKNNVDINNCINVEDKRERYSHILNINKRESIIKINDMKKTKSDSNDIKINDNRTEMYSNIFEINEKERTSIKVDTVKENKSDSNDIENGNKIERHSNVLYINPTKFDPIKINDINKKGERYYDNIENEDKREIYTNNDEYMDKRESNTNHIYINKKESYLENAKDVIKKESPLNNVEDTKKEESYSKNIENANKEEYESNEETYVNKMEEDSNDIEDISNRKYEYKEGQYLNKGEKYINNIDNVSIKESYYNKREKESIEISNLNKRESCTSNINNFRIRENQSNMVEYENKRKSDNIEINNLNKADIYVNSIKNVSKRNSSYNKKERDSKKDRDSVYDENRRKSSAYQINDIYNIRDKSKEKIDMDTIQDMNKRKSYVDNIHITNKKYSDINNAEDVIREKKYEDYNISVMYNMHNKRDQRKESNINIYNDNNMRRSTINKINDENSMHNVKNEIKNIDNNNNVDKINVNKSNTDKIYMDKIYMDKIYMDKRYMDKRYMDKRYMNKRYMDKIYMDKIYMDKIYMDKIYMDNEYMTDNIIKKNDKYNNNNNNNNSDVVEYVNERKHTSLINEHYLYERKSNVDKMKDINKGENDILYDVYNNSEKKNTKSSLYRNPEIITQGGNDNINNMNEHISSLNKVYRISNKKSNNNYKGQDYTYIVNENSGRNSSMYNNINNSDNMNKKECDFINDKENINKRISEIYDLRQINHNESNIENMENIKNMENIKNMENIKNMENIEHIKNMENMEHIKNIQNIEHIKNIENIQNIQNMEHIKNIESIQNIQNMEHIQNIENIQNIENIQNIENIKTIENIKKNIENINNKGSLMVNSNNINENIKKESDIYKIECDDDHMCDVTKIKGVDKQMSDTHKIKYDDNEKNNENKRKSGINKVFDIIKRTMDSYNIYNLSKCKIDEDNIYMLNEKKKNNINNMNKRKSENTYNINEREKDDMNRRMTENTYNLNKEKNLSVHNIKNIQPYNINNNIYEKTNDTIDNLNETGKNNTNDISIKGSDKNKEYKFYDNENKDNINMIIRDTINMSNLNNNISDNMQMAIHKEEKNIHKMNRKITYTNNLYNINESKTEYTININEQEEKSDFINNDNIKMDNEDKLYNCNERNNHIHKENKRNDIKYDNFKKDNIRKNMDNTKNIENMNNIDNMDNTKHIENVNNMKNIENVNNINNIDNMDNKKHIENVNNMKNIENVNNINNIDNMDNKKHIENINNMKNMENMNNINNIENMNNMKNIENMNNMKNIENMNNINNIENINNMKNIQNINNIENMDNMNNTKYIENMDNMNNIENMNNINNYNKIYDVNIINNKNYDSTYNELYEKDNQEENKNICNDKLDNSINEKTKYMKTLREYFVKSEKEIEDQKKNNMNDMYTRREEEKIKDNEDWKLYDFKNLKEKYKFQMNMKDSEINQLQNNLIDEFKELNEVSKLKNNLKGKTYNSNIGEEMLEENKEKQHGNYVGEYFDRNDMILKERIFEYAKHKTSIDMLKHPDDIKRNSKDLKKWKSQVITKKYADDWLSSDVLLSCFLNFIKLKKYVNITELSVKFQTTTDDIREKLEELEEQDMINGVLDEKGNYIYLSQEEINKLCFEIQSKGKVNTHDDFVKICNKVISLSVNDKDMEKLKEEEEKIIKAKTEIF</sequence>